<reference key="1">
    <citation type="journal article" date="2004" name="Vet. Immunol. Immunopathol.">
        <title>Cloning of bovine MAIL and its mRNA expression in white blood cells of Holstein cows.</title>
        <authorList>
            <person name="Yamaji D."/>
            <person name="Kitamura H."/>
            <person name="Kimura K."/>
            <person name="Matsushita Y."/>
            <person name="Okada H."/>
            <person name="Shiina T."/>
            <person name="Morimatsu M."/>
            <person name="Saito M."/>
        </authorList>
    </citation>
    <scope>NUCLEOTIDE SEQUENCE [MRNA]</scope>
    <scope>INDUCTION</scope>
    <source>
        <strain>Holstein</strain>
        <tissue>Blood</tissue>
    </source>
</reference>
<reference key="2">
    <citation type="submission" date="2007-09" db="EMBL/GenBank/DDBJ databases">
        <authorList>
            <consortium name="NIH - Mammalian Gene Collection (MGC) project"/>
        </authorList>
    </citation>
    <scope>NUCLEOTIDE SEQUENCE [LARGE SCALE MRNA]</scope>
    <source>
        <strain>Hereford</strain>
        <tissue>Colon</tissue>
    </source>
</reference>
<sequence length="719" mass="78239">MIVDKLLDDSRGGEGLLDAAGDCGLMTSPLNLAYFYGASPPAAAPGACDGGCSASGPSAPGSPGSDSSDFSSASSVSSCGAVESRPRGGARAERLQVEPHMGVVRQQRGPFQGVRVKNSVKELLLHIRSHKQKASGQAVDDFKTQSVNREQFTELKNTVSYSGKRKGSDSLSDGPACKRSALLHTQFLTPPQTPTPAESMEDVHHNESKQDSCADLLQNIINIKNECSPVSLNTVQVSWMSPGEVPQGSPHEQCQDLHRGQVFSPPQKYQPFQVSSSPHMMDQASMYQYSPQNQSVQPPPQHYTHNPALEYSPYSRTSQSPSYEPHLFGREPQFCPDQSFAPLLSDPRQSENIAVPPQTAPSVQQQIDTHLQNFSLMPPDTCEALARPDASSTPLSTPLPFPNLGGNPMSTTQLGKSFFQWQVEQEENKLANISQDQFLSKDADGDTFLHIAVAQGRRALSYVLARKMNALHMLDIKEHNGQSAFQVAVAANQHLIVQDLVTLGAQVNTTDCWGRTPLHVCAEKGHSQVLQAIQKGAAGSNQFVDLEATNYDGLTPLHCAVLAHNAVVHELQRNQQPHSPEVQELLLKNKSLVDTIKCLIQMGAAVEAKDRKSGRTALHLAAEEANLELIRLFLELPSCLSFVNAKAYNGNTALHVAASLQYRVTQLDAVRLLMRKGADPSTRNLENEQPVHLVPDGPVGEQIRRILKGKSIQQRAPPY</sequence>
<protein>
    <recommendedName>
        <fullName>NF-kappa-B inhibitor zeta</fullName>
    </recommendedName>
    <alternativeName>
        <fullName>I-kappa-B-zeta</fullName>
        <shortName>IkB-zeta</shortName>
        <shortName>IkappaBzeta</shortName>
    </alternativeName>
    <alternativeName>
        <fullName evidence="7">Molecule possessing ankyrin repeats induced by lipopolysaccharide</fullName>
        <shortName evidence="7">MAIL</shortName>
    </alternativeName>
</protein>
<dbReference type="EMBL" id="AB058410">
    <property type="protein sequence ID" value="BAB39767.1"/>
    <property type="molecule type" value="mRNA"/>
</dbReference>
<dbReference type="EMBL" id="BC153257">
    <property type="protein sequence ID" value="AAI53258.1"/>
    <property type="molecule type" value="mRNA"/>
</dbReference>
<dbReference type="RefSeq" id="NP_777151.2">
    <property type="nucleotide sequence ID" value="NM_174726.2"/>
</dbReference>
<dbReference type="SMR" id="Q9BE45"/>
<dbReference type="FunCoup" id="Q9BE45">
    <property type="interactions" value="217"/>
</dbReference>
<dbReference type="STRING" id="9913.ENSBTAP00000014591"/>
<dbReference type="PaxDb" id="9913-ENSBTAP00000014591"/>
<dbReference type="Ensembl" id="ENSBTAT00000014591.6">
    <property type="protein sequence ID" value="ENSBTAP00000014591.4"/>
    <property type="gene ID" value="ENSBTAG00000010987.6"/>
</dbReference>
<dbReference type="GeneID" id="282713"/>
<dbReference type="KEGG" id="bta:282713"/>
<dbReference type="CTD" id="64332"/>
<dbReference type="VEuPathDB" id="HostDB:ENSBTAG00000010987"/>
<dbReference type="VGNC" id="VGNC:32050">
    <property type="gene designation" value="NFKBIZ"/>
</dbReference>
<dbReference type="eggNOG" id="KOG0504">
    <property type="taxonomic scope" value="Eukaryota"/>
</dbReference>
<dbReference type="GeneTree" id="ENSGT00940000153695"/>
<dbReference type="HOGENOM" id="CLU_030240_0_0_1"/>
<dbReference type="InParanoid" id="Q9BE45"/>
<dbReference type="OMA" id="QFSWMSP"/>
<dbReference type="OrthoDB" id="341259at2759"/>
<dbReference type="TreeFam" id="TF330224"/>
<dbReference type="Proteomes" id="UP000009136">
    <property type="component" value="Chromosome 1"/>
</dbReference>
<dbReference type="Bgee" id="ENSBTAG00000010987">
    <property type="expression patterns" value="Expressed in ureter and 104 other cell types or tissues"/>
</dbReference>
<dbReference type="GO" id="GO:0036464">
    <property type="term" value="C:cytoplasmic ribonucleoprotein granule"/>
    <property type="evidence" value="ECO:0007669"/>
    <property type="project" value="Ensembl"/>
</dbReference>
<dbReference type="GO" id="GO:0016607">
    <property type="term" value="C:nuclear speck"/>
    <property type="evidence" value="ECO:0007669"/>
    <property type="project" value="Ensembl"/>
</dbReference>
<dbReference type="GO" id="GO:0005634">
    <property type="term" value="C:nucleus"/>
    <property type="evidence" value="ECO:0000318"/>
    <property type="project" value="GO_Central"/>
</dbReference>
<dbReference type="GO" id="GO:0070974">
    <property type="term" value="F:POU domain binding"/>
    <property type="evidence" value="ECO:0007669"/>
    <property type="project" value="InterPro"/>
</dbReference>
<dbReference type="GO" id="GO:0000978">
    <property type="term" value="F:RNA polymerase II cis-regulatory region sequence-specific DNA binding"/>
    <property type="evidence" value="ECO:0007669"/>
    <property type="project" value="Ensembl"/>
</dbReference>
<dbReference type="GO" id="GO:0003712">
    <property type="term" value="F:transcription coregulator activity"/>
    <property type="evidence" value="ECO:0007669"/>
    <property type="project" value="Ensembl"/>
</dbReference>
<dbReference type="GO" id="GO:0042100">
    <property type="term" value="P:B cell proliferation"/>
    <property type="evidence" value="ECO:0007669"/>
    <property type="project" value="Ensembl"/>
</dbReference>
<dbReference type="GO" id="GO:1990117">
    <property type="term" value="P:B cell receptor apoptotic signaling pathway"/>
    <property type="evidence" value="ECO:0007669"/>
    <property type="project" value="Ensembl"/>
</dbReference>
<dbReference type="GO" id="GO:0097398">
    <property type="term" value="P:cellular response to interleukin-17"/>
    <property type="evidence" value="ECO:0007669"/>
    <property type="project" value="Ensembl"/>
</dbReference>
<dbReference type="GO" id="GO:0071222">
    <property type="term" value="P:cellular response to lipopolysaccharide"/>
    <property type="evidence" value="ECO:0007669"/>
    <property type="project" value="Ensembl"/>
</dbReference>
<dbReference type="GO" id="GO:0071560">
    <property type="term" value="P:cellular response to transforming growth factor beta stimulus"/>
    <property type="evidence" value="ECO:0007669"/>
    <property type="project" value="Ensembl"/>
</dbReference>
<dbReference type="GO" id="GO:0006338">
    <property type="term" value="P:chromatin remodeling"/>
    <property type="evidence" value="ECO:0007669"/>
    <property type="project" value="Ensembl"/>
</dbReference>
<dbReference type="GO" id="GO:0002544">
    <property type="term" value="P:chronic inflammatory response"/>
    <property type="evidence" value="ECO:0007669"/>
    <property type="project" value="Ensembl"/>
</dbReference>
<dbReference type="GO" id="GO:0019221">
    <property type="term" value="P:cytokine-mediated signaling pathway"/>
    <property type="evidence" value="ECO:0007669"/>
    <property type="project" value="Ensembl"/>
</dbReference>
<dbReference type="GO" id="GO:0050829">
    <property type="term" value="P:defense response to Gram-negative bacterium"/>
    <property type="evidence" value="ECO:0007669"/>
    <property type="project" value="Ensembl"/>
</dbReference>
<dbReference type="GO" id="GO:1904019">
    <property type="term" value="P:epithelial cell apoptotic process"/>
    <property type="evidence" value="ECO:0007669"/>
    <property type="project" value="Ensembl"/>
</dbReference>
<dbReference type="GO" id="GO:0061436">
    <property type="term" value="P:establishment of skin barrier"/>
    <property type="evidence" value="ECO:0007669"/>
    <property type="project" value="Ensembl"/>
</dbReference>
<dbReference type="GO" id="GO:0097194">
    <property type="term" value="P:execution phase of apoptosis"/>
    <property type="evidence" value="ECO:0007669"/>
    <property type="project" value="Ensembl"/>
</dbReference>
<dbReference type="GO" id="GO:0048873">
    <property type="term" value="P:homeostasis of number of cells within a tissue"/>
    <property type="evidence" value="ECO:0007669"/>
    <property type="project" value="Ensembl"/>
</dbReference>
<dbReference type="GO" id="GO:0090594">
    <property type="term" value="P:inflammatory response to wounding"/>
    <property type="evidence" value="ECO:0007669"/>
    <property type="project" value="Ensembl"/>
</dbReference>
<dbReference type="GO" id="GO:0045190">
    <property type="term" value="P:isotype switching"/>
    <property type="evidence" value="ECO:0007669"/>
    <property type="project" value="Ensembl"/>
</dbReference>
<dbReference type="GO" id="GO:0032980">
    <property type="term" value="P:keratinocyte activation"/>
    <property type="evidence" value="ECO:0007669"/>
    <property type="project" value="Ensembl"/>
</dbReference>
<dbReference type="GO" id="GO:0030216">
    <property type="term" value="P:keratinocyte differentiation"/>
    <property type="evidence" value="ECO:0007669"/>
    <property type="project" value="Ensembl"/>
</dbReference>
<dbReference type="GO" id="GO:0043616">
    <property type="term" value="P:keratinocyte proliferation"/>
    <property type="evidence" value="ECO:0007669"/>
    <property type="project" value="Ensembl"/>
</dbReference>
<dbReference type="GO" id="GO:0042789">
    <property type="term" value="P:mRNA transcription by RNA polymerase II"/>
    <property type="evidence" value="ECO:0007669"/>
    <property type="project" value="Ensembl"/>
</dbReference>
<dbReference type="GO" id="GO:0002317">
    <property type="term" value="P:plasma cell differentiation"/>
    <property type="evidence" value="ECO:0007669"/>
    <property type="project" value="Ensembl"/>
</dbReference>
<dbReference type="GO" id="GO:0050729">
    <property type="term" value="P:positive regulation of inflammatory response"/>
    <property type="evidence" value="ECO:0007669"/>
    <property type="project" value="Ensembl"/>
</dbReference>
<dbReference type="GO" id="GO:2000321">
    <property type="term" value="P:positive regulation of T-helper 17 cell differentiation"/>
    <property type="evidence" value="ECO:0000250"/>
    <property type="project" value="UniProtKB"/>
</dbReference>
<dbReference type="GO" id="GO:0045944">
    <property type="term" value="P:positive regulation of transcription by RNA polymerase II"/>
    <property type="evidence" value="ECO:0007669"/>
    <property type="project" value="Ensembl"/>
</dbReference>
<dbReference type="GO" id="GO:0010468">
    <property type="term" value="P:regulation of gene expression"/>
    <property type="evidence" value="ECO:0000318"/>
    <property type="project" value="GO_Central"/>
</dbReference>
<dbReference type="GO" id="GO:0072718">
    <property type="term" value="P:response to cisplatin"/>
    <property type="evidence" value="ECO:0007669"/>
    <property type="project" value="Ensembl"/>
</dbReference>
<dbReference type="GO" id="GO:0051593">
    <property type="term" value="P:response to folic acid"/>
    <property type="evidence" value="ECO:0007669"/>
    <property type="project" value="Ensembl"/>
</dbReference>
<dbReference type="GO" id="GO:0140459">
    <property type="term" value="P:response to Gram-positive bacterium"/>
    <property type="evidence" value="ECO:0007669"/>
    <property type="project" value="Ensembl"/>
</dbReference>
<dbReference type="GO" id="GO:0009410">
    <property type="term" value="P:response to xenobiotic stimulus"/>
    <property type="evidence" value="ECO:0007669"/>
    <property type="project" value="Ensembl"/>
</dbReference>
<dbReference type="GO" id="GO:0048536">
    <property type="term" value="P:spleen development"/>
    <property type="evidence" value="ECO:0007669"/>
    <property type="project" value="Ensembl"/>
</dbReference>
<dbReference type="GO" id="GO:0002456">
    <property type="term" value="P:T cell mediated immunity"/>
    <property type="evidence" value="ECO:0007669"/>
    <property type="project" value="Ensembl"/>
</dbReference>
<dbReference type="GO" id="GO:0050852">
    <property type="term" value="P:T cell receptor signaling pathway"/>
    <property type="evidence" value="ECO:0000250"/>
    <property type="project" value="UniProtKB"/>
</dbReference>
<dbReference type="GO" id="GO:0045063">
    <property type="term" value="P:T-helper 1 cell differentiation"/>
    <property type="evidence" value="ECO:0007669"/>
    <property type="project" value="Ensembl"/>
</dbReference>
<dbReference type="GO" id="GO:0072539">
    <property type="term" value="P:T-helper 17 cell differentiation"/>
    <property type="evidence" value="ECO:0007669"/>
    <property type="project" value="Ensembl"/>
</dbReference>
<dbReference type="GO" id="GO:0002224">
    <property type="term" value="P:toll-like receptor signaling pathway"/>
    <property type="evidence" value="ECO:0007669"/>
    <property type="project" value="Ensembl"/>
</dbReference>
<dbReference type="GO" id="GO:0070897">
    <property type="term" value="P:transcription preinitiation complex assembly"/>
    <property type="evidence" value="ECO:0007669"/>
    <property type="project" value="Ensembl"/>
</dbReference>
<dbReference type="FunFam" id="1.25.40.20:FF:000179">
    <property type="entry name" value="NF-kappa-B inhibitor zeta isoform X2"/>
    <property type="match status" value="1"/>
</dbReference>
<dbReference type="FunFam" id="1.25.40.20:FF:000188">
    <property type="entry name" value="NF-kappa-B inhibitor zeta isoform X2"/>
    <property type="match status" value="1"/>
</dbReference>
<dbReference type="Gene3D" id="1.25.40.20">
    <property type="entry name" value="Ankyrin repeat-containing domain"/>
    <property type="match status" value="1"/>
</dbReference>
<dbReference type="InterPro" id="IPR002110">
    <property type="entry name" value="Ankyrin_rpt"/>
</dbReference>
<dbReference type="InterPro" id="IPR036770">
    <property type="entry name" value="Ankyrin_rpt-contain_sf"/>
</dbReference>
<dbReference type="InterPro" id="IPR047571">
    <property type="entry name" value="OCA"/>
</dbReference>
<dbReference type="PANTHER" id="PTHR24124">
    <property type="entry name" value="ANKYRIN REPEAT FAMILY A"/>
    <property type="match status" value="1"/>
</dbReference>
<dbReference type="PANTHER" id="PTHR24124:SF5">
    <property type="entry name" value="NF-KAPPA-B INHIBITOR ZETA"/>
    <property type="match status" value="1"/>
</dbReference>
<dbReference type="Pfam" id="PF12796">
    <property type="entry name" value="Ank_2"/>
    <property type="match status" value="2"/>
</dbReference>
<dbReference type="PRINTS" id="PR01415">
    <property type="entry name" value="ANKYRIN"/>
</dbReference>
<dbReference type="SMART" id="SM00248">
    <property type="entry name" value="ANK"/>
    <property type="match status" value="6"/>
</dbReference>
<dbReference type="SUPFAM" id="SSF48403">
    <property type="entry name" value="Ankyrin repeat"/>
    <property type="match status" value="1"/>
</dbReference>
<dbReference type="PROSITE" id="PS50297">
    <property type="entry name" value="ANK_REP_REGION"/>
    <property type="match status" value="1"/>
</dbReference>
<dbReference type="PROSITE" id="PS50088">
    <property type="entry name" value="ANK_REPEAT"/>
    <property type="match status" value="3"/>
</dbReference>
<dbReference type="PROSITE" id="PS52003">
    <property type="entry name" value="OCA"/>
    <property type="match status" value="1"/>
</dbReference>
<accession>Q9BE45</accession>
<accession>A7Z059</accession>
<evidence type="ECO:0000250" key="1"/>
<evidence type="ECO:0000250" key="2">
    <source>
        <dbReference type="UniProtKB" id="Q9BYH8"/>
    </source>
</evidence>
<evidence type="ECO:0000250" key="3">
    <source>
        <dbReference type="UniProtKB" id="Q9EST8"/>
    </source>
</evidence>
<evidence type="ECO:0000255" key="4">
    <source>
        <dbReference type="PROSITE-ProRule" id="PRU01347"/>
    </source>
</evidence>
<evidence type="ECO:0000256" key="5">
    <source>
        <dbReference type="SAM" id="MobiDB-lite"/>
    </source>
</evidence>
<evidence type="ECO:0000269" key="6">
    <source>
    </source>
</evidence>
<evidence type="ECO:0000303" key="7">
    <source>
    </source>
</evidence>
<evidence type="ECO:0000305" key="8"/>
<keyword id="KW-0010">Activator</keyword>
<keyword id="KW-0040">ANK repeat</keyword>
<keyword id="KW-0539">Nucleus</keyword>
<keyword id="KW-1185">Reference proteome</keyword>
<keyword id="KW-0677">Repeat</keyword>
<keyword id="KW-0804">Transcription</keyword>
<keyword id="KW-0805">Transcription regulation</keyword>
<feature type="chain" id="PRO_0000323576" description="NF-kappa-B inhibitor zeta">
    <location>
        <begin position="1"/>
        <end position="719"/>
    </location>
</feature>
<feature type="domain" description="OCA" evidence="4">
    <location>
        <begin position="108"/>
        <end position="130"/>
    </location>
</feature>
<feature type="repeat" description="ANK 1">
    <location>
        <begin position="444"/>
        <end position="473"/>
    </location>
</feature>
<feature type="repeat" description="ANK 2">
    <location>
        <begin position="480"/>
        <end position="509"/>
    </location>
</feature>
<feature type="repeat" description="ANK 3">
    <location>
        <begin position="513"/>
        <end position="542"/>
    </location>
</feature>
<feature type="repeat" description="ANK 4">
    <location>
        <begin position="552"/>
        <end position="581"/>
    </location>
</feature>
<feature type="repeat" description="ANK 5">
    <location>
        <begin position="583"/>
        <end position="608"/>
    </location>
</feature>
<feature type="repeat" description="ANK 6">
    <location>
        <begin position="613"/>
        <end position="642"/>
    </location>
</feature>
<feature type="repeat" description="ANK 7">
    <location>
        <begin position="649"/>
        <end position="682"/>
    </location>
</feature>
<feature type="region of interest" description="Disordered" evidence="5">
    <location>
        <begin position="46"/>
        <end position="97"/>
    </location>
</feature>
<feature type="region of interest" description="Disordered" evidence="5">
    <location>
        <begin position="188"/>
        <end position="210"/>
    </location>
</feature>
<feature type="region of interest" description="Disordered" evidence="5">
    <location>
        <begin position="289"/>
        <end position="343"/>
    </location>
</feature>
<feature type="region of interest" description="Required for transcriptional activity" evidence="1">
    <location>
        <begin position="322"/>
        <end position="394"/>
    </location>
</feature>
<feature type="region of interest" description="Interaction with NFKB1/p50" evidence="1">
    <location>
        <begin position="405"/>
        <end position="719"/>
    </location>
</feature>
<feature type="short sequence motif" description="Nuclear localization signal" evidence="1">
    <location>
        <begin position="164"/>
        <end position="179"/>
    </location>
</feature>
<feature type="compositionally biased region" description="Low complexity" evidence="5">
    <location>
        <begin position="46"/>
        <end position="81"/>
    </location>
</feature>
<feature type="compositionally biased region" description="Basic and acidic residues" evidence="5">
    <location>
        <begin position="84"/>
        <end position="97"/>
    </location>
</feature>
<feature type="compositionally biased region" description="Basic and acidic residues" evidence="5">
    <location>
        <begin position="201"/>
        <end position="210"/>
    </location>
</feature>
<feature type="sequence conflict" description="In Ref. 1; BAB39767." evidence="8" ref="1">
    <original>Q</original>
    <variation>H</variation>
    <location>
        <position position="236"/>
    </location>
</feature>
<feature type="sequence conflict" description="In Ref. 1; BAB39767." evidence="8" ref="1">
    <original>EVPQG</original>
    <variation>QSLRL</variation>
    <location>
        <begin position="244"/>
        <end position="248"/>
    </location>
</feature>
<proteinExistence type="evidence at transcript level"/>
<comment type="function">
    <text evidence="2 3">Involved in regulation of NF-kappa-B transcription factor complexes. Inhibits NF-kappa-B activity without affecting its nuclear translocation upon stimulation. Inhibits DNA-binding of RELA and NFKB1/p50, and of the NF-kappa-B p65-p50 heterodimer and the NF-kappa-B p50-p50 homodimer. Also seems to activate NF-kappa-B-mediated transcription (By similarity). In vitro, upon association with NFKB1/p50 has transcriptional activation activity and, together with NFKB1/p50 and RELA, is recruited to LCN2 promoters. Promotes transcription of LCN2 and DEFB4 (By similarity). Is recruited to IL-6 promoters and activates IL-6 but decreases TNF-alpha production in response to LPS. Seems to be involved in the induction of inflammatory genes activated through TLR/IL-1 receptor signaling. Involved in the induction of T helper 17 cells (Th17) differentiation upon recognition of antigen by T cell antigen receptor (TCR) (By similarity).</text>
</comment>
<comment type="subunit">
    <text evidence="2 3">Interacts with NFKB1/p50 (By similarity). Interacts with RELA (By similarity). Interacts with AKIRIN2 (By similarity).</text>
</comment>
<comment type="subcellular location">
    <subcellularLocation>
        <location evidence="3">Nucleus</location>
    </subcellularLocation>
</comment>
<comment type="induction">
    <text evidence="6">By LPS in polymorphonuclear cells, monocytes/macrophages and total lymphocytes, but not in T-lymphocytes (in vitro). By E.coli intramammary injection in peripheral blood leukocytes.</text>
</comment>
<organism>
    <name type="scientific">Bos taurus</name>
    <name type="common">Bovine</name>
    <dbReference type="NCBI Taxonomy" id="9913"/>
    <lineage>
        <taxon>Eukaryota</taxon>
        <taxon>Metazoa</taxon>
        <taxon>Chordata</taxon>
        <taxon>Craniata</taxon>
        <taxon>Vertebrata</taxon>
        <taxon>Euteleostomi</taxon>
        <taxon>Mammalia</taxon>
        <taxon>Eutheria</taxon>
        <taxon>Laurasiatheria</taxon>
        <taxon>Artiodactyla</taxon>
        <taxon>Ruminantia</taxon>
        <taxon>Pecora</taxon>
        <taxon>Bovidae</taxon>
        <taxon>Bovinae</taxon>
        <taxon>Bos</taxon>
    </lineage>
</organism>
<name>IKBZ_BOVIN</name>
<gene>
    <name type="primary">NFKBIZ</name>
    <name evidence="7" type="synonym">MAIL</name>
</gene>